<reference key="1">
    <citation type="submission" date="2004-11" db="EMBL/GenBank/DDBJ databases">
        <authorList>
            <consortium name="The German cDNA consortium"/>
        </authorList>
    </citation>
    <scope>NUCLEOTIDE SEQUENCE [LARGE SCALE MRNA]</scope>
    <source>
        <tissue>Kidney</tissue>
    </source>
</reference>
<dbReference type="EC" id="2.5.1.6" evidence="2"/>
<dbReference type="EMBL" id="CR860888">
    <property type="protein sequence ID" value="CAH92995.1"/>
    <property type="molecule type" value="mRNA"/>
</dbReference>
<dbReference type="RefSeq" id="NP_001126769.1">
    <property type="nucleotide sequence ID" value="NM_001133297.1"/>
</dbReference>
<dbReference type="SMR" id="Q5R5H1"/>
<dbReference type="FunCoup" id="Q5R5H1">
    <property type="interactions" value="1262"/>
</dbReference>
<dbReference type="STRING" id="9601.ENSPPYP00000013638"/>
<dbReference type="Ensembl" id="ENSPPYT00000014193.2">
    <property type="protein sequence ID" value="ENSPPYP00000013638.1"/>
    <property type="gene ID" value="ENSPPYG00000012229.2"/>
</dbReference>
<dbReference type="GeneID" id="100173772"/>
<dbReference type="KEGG" id="pon:100173772"/>
<dbReference type="CTD" id="4144"/>
<dbReference type="eggNOG" id="KOG1506">
    <property type="taxonomic scope" value="Eukaryota"/>
</dbReference>
<dbReference type="GeneTree" id="ENSGT00950000183185"/>
<dbReference type="HOGENOM" id="CLU_041802_0_1_1"/>
<dbReference type="InParanoid" id="Q5R5H1"/>
<dbReference type="OMA" id="ASYMARY"/>
<dbReference type="OrthoDB" id="5852090at2759"/>
<dbReference type="TreeFam" id="TF300511"/>
<dbReference type="UniPathway" id="UPA00315">
    <property type="reaction ID" value="UER00080"/>
</dbReference>
<dbReference type="Proteomes" id="UP000001595">
    <property type="component" value="Chromosome 2A"/>
</dbReference>
<dbReference type="GO" id="GO:0048269">
    <property type="term" value="C:methionine adenosyltransferase complex"/>
    <property type="evidence" value="ECO:0000250"/>
    <property type="project" value="UniProtKB"/>
</dbReference>
<dbReference type="GO" id="GO:0005524">
    <property type="term" value="F:ATP binding"/>
    <property type="evidence" value="ECO:0007669"/>
    <property type="project" value="UniProtKB-KW"/>
</dbReference>
<dbReference type="GO" id="GO:0042802">
    <property type="term" value="F:identical protein binding"/>
    <property type="evidence" value="ECO:0007669"/>
    <property type="project" value="Ensembl"/>
</dbReference>
<dbReference type="GO" id="GO:0046872">
    <property type="term" value="F:metal ion binding"/>
    <property type="evidence" value="ECO:0007669"/>
    <property type="project" value="UniProtKB-KW"/>
</dbReference>
<dbReference type="GO" id="GO:0004478">
    <property type="term" value="F:methionine adenosyltransferase activity"/>
    <property type="evidence" value="ECO:0000250"/>
    <property type="project" value="UniProtKB"/>
</dbReference>
<dbReference type="GO" id="GO:1990830">
    <property type="term" value="P:cellular response to leukemia inhibitory factor"/>
    <property type="evidence" value="ECO:0007669"/>
    <property type="project" value="Ensembl"/>
</dbReference>
<dbReference type="GO" id="GO:0061431">
    <property type="term" value="P:cellular response to methionine"/>
    <property type="evidence" value="ECO:0007669"/>
    <property type="project" value="Ensembl"/>
</dbReference>
<dbReference type="GO" id="GO:0006730">
    <property type="term" value="P:one-carbon metabolic process"/>
    <property type="evidence" value="ECO:0007669"/>
    <property type="project" value="UniProtKB-KW"/>
</dbReference>
<dbReference type="GO" id="GO:1904263">
    <property type="term" value="P:positive regulation of TORC1 signaling"/>
    <property type="evidence" value="ECO:0007669"/>
    <property type="project" value="Ensembl"/>
</dbReference>
<dbReference type="GO" id="GO:0051291">
    <property type="term" value="P:protein heterooligomerization"/>
    <property type="evidence" value="ECO:0000250"/>
    <property type="project" value="UniProtKB"/>
</dbReference>
<dbReference type="GO" id="GO:0034214">
    <property type="term" value="P:protein hexamerization"/>
    <property type="evidence" value="ECO:0000250"/>
    <property type="project" value="UniProtKB"/>
</dbReference>
<dbReference type="GO" id="GO:0006556">
    <property type="term" value="P:S-adenosylmethionine biosynthetic process"/>
    <property type="evidence" value="ECO:0000250"/>
    <property type="project" value="UniProtKB"/>
</dbReference>
<dbReference type="CDD" id="cd18079">
    <property type="entry name" value="S-AdoMet_synt"/>
    <property type="match status" value="1"/>
</dbReference>
<dbReference type="FunFam" id="3.30.300.10:FF:000001">
    <property type="entry name" value="S-adenosylmethionine synthase"/>
    <property type="match status" value="1"/>
</dbReference>
<dbReference type="FunFam" id="3.30.300.10:FF:000003">
    <property type="entry name" value="S-adenosylmethionine synthase"/>
    <property type="match status" value="1"/>
</dbReference>
<dbReference type="FunFam" id="3.30.300.10:FF:000004">
    <property type="entry name" value="S-adenosylmethionine synthase"/>
    <property type="match status" value="1"/>
</dbReference>
<dbReference type="Gene3D" id="3.30.300.10">
    <property type="match status" value="3"/>
</dbReference>
<dbReference type="HAMAP" id="MF_00086">
    <property type="entry name" value="S_AdoMet_synth1"/>
    <property type="match status" value="1"/>
</dbReference>
<dbReference type="InterPro" id="IPR022631">
    <property type="entry name" value="ADOMET_SYNTHASE_CS"/>
</dbReference>
<dbReference type="InterPro" id="IPR022630">
    <property type="entry name" value="S-AdoMet_synt_C"/>
</dbReference>
<dbReference type="InterPro" id="IPR022629">
    <property type="entry name" value="S-AdoMet_synt_central"/>
</dbReference>
<dbReference type="InterPro" id="IPR022628">
    <property type="entry name" value="S-AdoMet_synt_N"/>
</dbReference>
<dbReference type="InterPro" id="IPR002133">
    <property type="entry name" value="S-AdoMet_synthetase"/>
</dbReference>
<dbReference type="InterPro" id="IPR022636">
    <property type="entry name" value="S-AdoMet_synthetase_sfam"/>
</dbReference>
<dbReference type="NCBIfam" id="TIGR01034">
    <property type="entry name" value="metK"/>
    <property type="match status" value="1"/>
</dbReference>
<dbReference type="PANTHER" id="PTHR11964">
    <property type="entry name" value="S-ADENOSYLMETHIONINE SYNTHETASE"/>
    <property type="match status" value="1"/>
</dbReference>
<dbReference type="Pfam" id="PF02773">
    <property type="entry name" value="S-AdoMet_synt_C"/>
    <property type="match status" value="1"/>
</dbReference>
<dbReference type="Pfam" id="PF02772">
    <property type="entry name" value="S-AdoMet_synt_M"/>
    <property type="match status" value="1"/>
</dbReference>
<dbReference type="Pfam" id="PF00438">
    <property type="entry name" value="S-AdoMet_synt_N"/>
    <property type="match status" value="1"/>
</dbReference>
<dbReference type="PIRSF" id="PIRSF000497">
    <property type="entry name" value="MAT"/>
    <property type="match status" value="1"/>
</dbReference>
<dbReference type="SUPFAM" id="SSF55973">
    <property type="entry name" value="S-adenosylmethionine synthetase"/>
    <property type="match status" value="3"/>
</dbReference>
<dbReference type="PROSITE" id="PS00376">
    <property type="entry name" value="ADOMET_SYNTHASE_1"/>
    <property type="match status" value="1"/>
</dbReference>
<dbReference type="PROSITE" id="PS00377">
    <property type="entry name" value="ADOMET_SYNTHASE_2"/>
    <property type="match status" value="1"/>
</dbReference>
<sequence length="395" mass="43661">MNGQLNGFHEAFIEEGTFLFTSESVGEGHPDKICDQISDAVLDAHLQQDPDAKVACETVAKTGMILLAGEITSRAAVDYQKVVREAVKHIGYDDSSKGFDYKTCNVLVALEQQSPDIAQGVHLDRNEEDIGAGDQGLMFGYATDETEECMPLTIVLAHKLNAKLAELRRNGTLPWLRPDSKTQVTVQYMQDRGAVLPIRVHTIVISVQHDEEVCLDEMRDALKEKVIKAVVPAKYLDEDTIYHLQPSGRFVIGGPQGDAGLTGRKIIVDTYGGWGAHGGGAFSGKDYTKVDRSAAYAARWVAKSLVKGGLCRRVLVQVSYAIGVSHPLSISIFHYGTSQKSERELLEIVKKNFDLRPGVIVRDLDLKKPIYQRTAAYGHFGRDSFPWEVPKKLKY</sequence>
<gene>
    <name type="primary">MAT2A</name>
</gene>
<comment type="function">
    <text evidence="2">Catalyzes the formation of S-adenosylmethionine from methionine and ATP. The reaction comprises two steps that are both catalyzed by the same enzyme: formation of S-adenosylmethionine (AdoMet) and triphosphate, and subsequent hydrolysis of the triphosphate.</text>
</comment>
<comment type="catalytic activity">
    <reaction evidence="2">
        <text>L-methionine + ATP + H2O = S-adenosyl-L-methionine + phosphate + diphosphate</text>
        <dbReference type="Rhea" id="RHEA:21080"/>
        <dbReference type="ChEBI" id="CHEBI:15377"/>
        <dbReference type="ChEBI" id="CHEBI:30616"/>
        <dbReference type="ChEBI" id="CHEBI:33019"/>
        <dbReference type="ChEBI" id="CHEBI:43474"/>
        <dbReference type="ChEBI" id="CHEBI:57844"/>
        <dbReference type="ChEBI" id="CHEBI:59789"/>
        <dbReference type="EC" id="2.5.1.6"/>
    </reaction>
</comment>
<comment type="cofactor">
    <cofactor evidence="1">
        <name>Mg(2+)</name>
        <dbReference type="ChEBI" id="CHEBI:18420"/>
    </cofactor>
    <text evidence="2">Binds 2 magnesium ions per subunit. The magnesium ions interact primarily with the substrate.</text>
</comment>
<comment type="cofactor">
    <cofactor evidence="1">
        <name>K(+)</name>
        <dbReference type="ChEBI" id="CHEBI:29103"/>
    </cofactor>
    <text evidence="2">Binds 1 potassium ion per subunit. The potassium ion interacts primarily with the substrate.</text>
</comment>
<comment type="pathway">
    <text evidence="2">Amino-acid biosynthesis; S-adenosyl-L-methionine biosynthesis; S-adenosyl-L-methionine from L-methionine: step 1/1.</text>
</comment>
<comment type="subunit">
    <text evidence="2">Heterotrimer; composed of a catalytic MAT2A homodimer that binds one regulatory MAT2B chain. Heterohexamer; composed of a central, catalytic MAT2A homotetramer flanked on either side by a regulatory MAT2B chain.</text>
</comment>
<comment type="similarity">
    <text evidence="3">Belongs to the AdoMet synthase family.</text>
</comment>
<feature type="chain" id="PRO_0000174438" description="S-adenosylmethionine synthase isoform type-2">
    <location>
        <begin position="1"/>
        <end position="395"/>
    </location>
</feature>
<feature type="region of interest" description="Flexible loop" evidence="1">
    <location>
        <begin position="113"/>
        <end position="125"/>
    </location>
</feature>
<feature type="binding site" description="in other chain" evidence="2">
    <location>
        <position position="29"/>
    </location>
    <ligand>
        <name>ATP</name>
        <dbReference type="ChEBI" id="CHEBI:30616"/>
        <note>ligand shared between two neighboring subunits</note>
    </ligand>
</feature>
<feature type="binding site" evidence="2">
    <location>
        <position position="31"/>
    </location>
    <ligand>
        <name>Mg(2+)</name>
        <dbReference type="ChEBI" id="CHEBI:18420"/>
    </ligand>
</feature>
<feature type="binding site" evidence="1">
    <location>
        <position position="57"/>
    </location>
    <ligand>
        <name>K(+)</name>
        <dbReference type="ChEBI" id="CHEBI:29103"/>
    </ligand>
</feature>
<feature type="binding site" description="in other chain" evidence="2">
    <location>
        <position position="70"/>
    </location>
    <ligand>
        <name>L-methionine</name>
        <dbReference type="ChEBI" id="CHEBI:57844"/>
        <note>ligand shared between two neighboring subunits</note>
    </ligand>
</feature>
<feature type="binding site" description="in other chain" evidence="2">
    <location>
        <position position="113"/>
    </location>
    <ligand>
        <name>L-methionine</name>
        <dbReference type="ChEBI" id="CHEBI:57844"/>
        <note>ligand shared between two neighboring subunits</note>
    </ligand>
</feature>
<feature type="binding site" description="in other chain" evidence="2">
    <location>
        <begin position="179"/>
        <end position="181"/>
    </location>
    <ligand>
        <name>ATP</name>
        <dbReference type="ChEBI" id="CHEBI:30616"/>
        <note>ligand shared between two neighboring subunits</note>
    </ligand>
</feature>
<feature type="binding site" description="in other chain" evidence="2">
    <location>
        <begin position="247"/>
        <end position="250"/>
    </location>
    <ligand>
        <name>ATP</name>
        <dbReference type="ChEBI" id="CHEBI:30616"/>
        <note>ligand shared between two neighboring subunits</note>
    </ligand>
</feature>
<feature type="binding site" description="in other chain" evidence="2">
    <location>
        <position position="258"/>
    </location>
    <ligand>
        <name>ATP</name>
        <dbReference type="ChEBI" id="CHEBI:30616"/>
        <note>ligand shared between two neighboring subunits</note>
    </ligand>
</feature>
<feature type="binding site" evidence="2">
    <location>
        <position position="258"/>
    </location>
    <ligand>
        <name>L-methionine</name>
        <dbReference type="ChEBI" id="CHEBI:57844"/>
        <note>ligand shared between two neighboring subunits</note>
    </ligand>
</feature>
<feature type="binding site" description="in other chain" evidence="2">
    <location>
        <begin position="264"/>
        <end position="265"/>
    </location>
    <ligand>
        <name>ATP</name>
        <dbReference type="ChEBI" id="CHEBI:30616"/>
        <note>ligand shared between two neighboring subunits</note>
    </ligand>
</feature>
<feature type="binding site" evidence="2">
    <location>
        <position position="281"/>
    </location>
    <ligand>
        <name>ATP</name>
        <dbReference type="ChEBI" id="CHEBI:30616"/>
        <note>ligand shared between two neighboring subunits</note>
    </ligand>
</feature>
<feature type="binding site" evidence="2">
    <location>
        <position position="285"/>
    </location>
    <ligand>
        <name>ATP</name>
        <dbReference type="ChEBI" id="CHEBI:30616"/>
        <note>ligand shared between two neighboring subunits</note>
    </ligand>
</feature>
<feature type="binding site" description="in other chain" evidence="1">
    <location>
        <position position="289"/>
    </location>
    <ligand>
        <name>L-methionine</name>
        <dbReference type="ChEBI" id="CHEBI:57844"/>
        <note>ligand shared between two neighboring subunits</note>
    </ligand>
</feature>
<feature type="binding site" evidence="2">
    <location>
        <position position="291"/>
    </location>
    <ligand>
        <name>ATP</name>
        <dbReference type="ChEBI" id="CHEBI:30616"/>
        <note>ligand shared between two neighboring subunits</note>
    </ligand>
</feature>
<feature type="modified residue" description="N6-acetyllysine" evidence="2">
    <location>
        <position position="81"/>
    </location>
</feature>
<feature type="modified residue" description="Phosphoserine" evidence="2">
    <location>
        <position position="114"/>
    </location>
</feature>
<feature type="modified residue" description="Phosphoserine" evidence="2">
    <location>
        <position position="384"/>
    </location>
</feature>
<feature type="cross-link" description="Glycyl lysine isopeptide (Lys-Gly) (interchain with G-Cter in SUMO2)" evidence="2">
    <location>
        <position position="228"/>
    </location>
</feature>
<feature type="cross-link" description="Glycyl lysine isopeptide (Lys-Gly) (interchain with G-Cter in SUMO2)" evidence="2">
    <location>
        <position position="234"/>
    </location>
</feature>
<accession>Q5R5H1</accession>
<proteinExistence type="evidence at transcript level"/>
<organism>
    <name type="scientific">Pongo abelii</name>
    <name type="common">Sumatran orangutan</name>
    <name type="synonym">Pongo pygmaeus abelii</name>
    <dbReference type="NCBI Taxonomy" id="9601"/>
    <lineage>
        <taxon>Eukaryota</taxon>
        <taxon>Metazoa</taxon>
        <taxon>Chordata</taxon>
        <taxon>Craniata</taxon>
        <taxon>Vertebrata</taxon>
        <taxon>Euteleostomi</taxon>
        <taxon>Mammalia</taxon>
        <taxon>Eutheria</taxon>
        <taxon>Euarchontoglires</taxon>
        <taxon>Primates</taxon>
        <taxon>Haplorrhini</taxon>
        <taxon>Catarrhini</taxon>
        <taxon>Hominidae</taxon>
        <taxon>Pongo</taxon>
    </lineage>
</organism>
<protein>
    <recommendedName>
        <fullName>S-adenosylmethionine synthase isoform type-2</fullName>
        <shortName>AdoMet synthase 2</shortName>
        <ecNumber evidence="2">2.5.1.6</ecNumber>
    </recommendedName>
    <alternativeName>
        <fullName>Methionine adenosyltransferase 2</fullName>
        <shortName>MAT 2</shortName>
    </alternativeName>
</protein>
<evidence type="ECO:0000250" key="1">
    <source>
        <dbReference type="UniProtKB" id="P0A817"/>
    </source>
</evidence>
<evidence type="ECO:0000250" key="2">
    <source>
        <dbReference type="UniProtKB" id="P31153"/>
    </source>
</evidence>
<evidence type="ECO:0000305" key="3"/>
<keyword id="KW-0007">Acetylation</keyword>
<keyword id="KW-0067">ATP-binding</keyword>
<keyword id="KW-1017">Isopeptide bond</keyword>
<keyword id="KW-0460">Magnesium</keyword>
<keyword id="KW-0479">Metal-binding</keyword>
<keyword id="KW-0547">Nucleotide-binding</keyword>
<keyword id="KW-0554">One-carbon metabolism</keyword>
<keyword id="KW-0597">Phosphoprotein</keyword>
<keyword id="KW-0630">Potassium</keyword>
<keyword id="KW-1185">Reference proteome</keyword>
<keyword id="KW-0808">Transferase</keyword>
<keyword id="KW-0832">Ubl conjugation</keyword>
<name>METK2_PONAB</name>